<accession>B7LQ73</accession>
<keyword id="KW-0687">Ribonucleoprotein</keyword>
<keyword id="KW-0689">Ribosomal protein</keyword>
<comment type="similarity">
    <text evidence="1">Belongs to the bacterial ribosomal protein bL35 family.</text>
</comment>
<name>RL35_ESCF3</name>
<dbReference type="EMBL" id="CU928158">
    <property type="protein sequence ID" value="CAQ88870.1"/>
    <property type="molecule type" value="Genomic_DNA"/>
</dbReference>
<dbReference type="RefSeq" id="WP_001124225.1">
    <property type="nucleotide sequence ID" value="NC_011740.1"/>
</dbReference>
<dbReference type="SMR" id="B7LQ73"/>
<dbReference type="GeneID" id="97601348"/>
<dbReference type="KEGG" id="efe:EFER_1349"/>
<dbReference type="HOGENOM" id="CLU_169643_1_1_6"/>
<dbReference type="OrthoDB" id="47476at2"/>
<dbReference type="Proteomes" id="UP000000745">
    <property type="component" value="Chromosome"/>
</dbReference>
<dbReference type="GO" id="GO:0022625">
    <property type="term" value="C:cytosolic large ribosomal subunit"/>
    <property type="evidence" value="ECO:0007669"/>
    <property type="project" value="TreeGrafter"/>
</dbReference>
<dbReference type="GO" id="GO:0003735">
    <property type="term" value="F:structural constituent of ribosome"/>
    <property type="evidence" value="ECO:0007669"/>
    <property type="project" value="InterPro"/>
</dbReference>
<dbReference type="GO" id="GO:0006412">
    <property type="term" value="P:translation"/>
    <property type="evidence" value="ECO:0007669"/>
    <property type="project" value="UniProtKB-UniRule"/>
</dbReference>
<dbReference type="FunFam" id="4.10.410.60:FF:000001">
    <property type="entry name" value="50S ribosomal protein L35"/>
    <property type="match status" value="1"/>
</dbReference>
<dbReference type="Gene3D" id="4.10.410.60">
    <property type="match status" value="1"/>
</dbReference>
<dbReference type="HAMAP" id="MF_00514">
    <property type="entry name" value="Ribosomal_bL35"/>
    <property type="match status" value="1"/>
</dbReference>
<dbReference type="InterPro" id="IPR001706">
    <property type="entry name" value="Ribosomal_bL35"/>
</dbReference>
<dbReference type="InterPro" id="IPR021137">
    <property type="entry name" value="Ribosomal_bL35-like"/>
</dbReference>
<dbReference type="InterPro" id="IPR018265">
    <property type="entry name" value="Ribosomal_bL35_CS"/>
</dbReference>
<dbReference type="InterPro" id="IPR037229">
    <property type="entry name" value="Ribosomal_bL35_sf"/>
</dbReference>
<dbReference type="NCBIfam" id="TIGR00001">
    <property type="entry name" value="rpmI_bact"/>
    <property type="match status" value="1"/>
</dbReference>
<dbReference type="PANTHER" id="PTHR33343">
    <property type="entry name" value="54S RIBOSOMAL PROTEIN BL35M"/>
    <property type="match status" value="1"/>
</dbReference>
<dbReference type="PANTHER" id="PTHR33343:SF1">
    <property type="entry name" value="LARGE RIBOSOMAL SUBUNIT PROTEIN BL35M"/>
    <property type="match status" value="1"/>
</dbReference>
<dbReference type="Pfam" id="PF01632">
    <property type="entry name" value="Ribosomal_L35p"/>
    <property type="match status" value="1"/>
</dbReference>
<dbReference type="PRINTS" id="PR00064">
    <property type="entry name" value="RIBOSOMALL35"/>
</dbReference>
<dbReference type="SUPFAM" id="SSF143034">
    <property type="entry name" value="L35p-like"/>
    <property type="match status" value="1"/>
</dbReference>
<dbReference type="PROSITE" id="PS00936">
    <property type="entry name" value="RIBOSOMAL_L35"/>
    <property type="match status" value="1"/>
</dbReference>
<organism>
    <name type="scientific">Escherichia fergusonii (strain ATCC 35469 / DSM 13698 / CCUG 18766 / IAM 14443 / JCM 21226 / LMG 7866 / NBRC 102419 / NCTC 12128 / CDC 0568-73)</name>
    <dbReference type="NCBI Taxonomy" id="585054"/>
    <lineage>
        <taxon>Bacteria</taxon>
        <taxon>Pseudomonadati</taxon>
        <taxon>Pseudomonadota</taxon>
        <taxon>Gammaproteobacteria</taxon>
        <taxon>Enterobacterales</taxon>
        <taxon>Enterobacteriaceae</taxon>
        <taxon>Escherichia</taxon>
    </lineage>
</organism>
<reference key="1">
    <citation type="journal article" date="2009" name="PLoS Genet.">
        <title>Organised genome dynamics in the Escherichia coli species results in highly diverse adaptive paths.</title>
        <authorList>
            <person name="Touchon M."/>
            <person name="Hoede C."/>
            <person name="Tenaillon O."/>
            <person name="Barbe V."/>
            <person name="Baeriswyl S."/>
            <person name="Bidet P."/>
            <person name="Bingen E."/>
            <person name="Bonacorsi S."/>
            <person name="Bouchier C."/>
            <person name="Bouvet O."/>
            <person name="Calteau A."/>
            <person name="Chiapello H."/>
            <person name="Clermont O."/>
            <person name="Cruveiller S."/>
            <person name="Danchin A."/>
            <person name="Diard M."/>
            <person name="Dossat C."/>
            <person name="Karoui M.E."/>
            <person name="Frapy E."/>
            <person name="Garry L."/>
            <person name="Ghigo J.M."/>
            <person name="Gilles A.M."/>
            <person name="Johnson J."/>
            <person name="Le Bouguenec C."/>
            <person name="Lescat M."/>
            <person name="Mangenot S."/>
            <person name="Martinez-Jehanne V."/>
            <person name="Matic I."/>
            <person name="Nassif X."/>
            <person name="Oztas S."/>
            <person name="Petit M.A."/>
            <person name="Pichon C."/>
            <person name="Rouy Z."/>
            <person name="Ruf C.S."/>
            <person name="Schneider D."/>
            <person name="Tourret J."/>
            <person name="Vacherie B."/>
            <person name="Vallenet D."/>
            <person name="Medigue C."/>
            <person name="Rocha E.P.C."/>
            <person name="Denamur E."/>
        </authorList>
    </citation>
    <scope>NUCLEOTIDE SEQUENCE [LARGE SCALE GENOMIC DNA]</scope>
    <source>
        <strain>ATCC 35469 / DSM 13698 / BCRC 15582 / CCUG 18766 / IAM 14443 / JCM 21226 / LMG 7866 / NBRC 102419 / NCTC 12128 / CDC 0568-73</strain>
    </source>
</reference>
<proteinExistence type="inferred from homology"/>
<sequence>MPKIKTVRGAAKRFKKTGKGGFKHKHANLRHILTKKATKRKRHLRPKAMVSKGDLGLVIACLPYA</sequence>
<evidence type="ECO:0000255" key="1">
    <source>
        <dbReference type="HAMAP-Rule" id="MF_00514"/>
    </source>
</evidence>
<evidence type="ECO:0000256" key="2">
    <source>
        <dbReference type="SAM" id="MobiDB-lite"/>
    </source>
</evidence>
<evidence type="ECO:0000305" key="3"/>
<protein>
    <recommendedName>
        <fullName evidence="1">Large ribosomal subunit protein bL35</fullName>
    </recommendedName>
    <alternativeName>
        <fullName evidence="3">50S ribosomal protein L35</fullName>
    </alternativeName>
</protein>
<gene>
    <name evidence="1" type="primary">rpmI</name>
    <name type="ordered locus">EFER_1349</name>
</gene>
<feature type="chain" id="PRO_1000127353" description="Large ribosomal subunit protein bL35">
    <location>
        <begin position="1"/>
        <end position="65"/>
    </location>
</feature>
<feature type="region of interest" description="Disordered" evidence="2">
    <location>
        <begin position="1"/>
        <end position="22"/>
    </location>
</feature>
<feature type="compositionally biased region" description="Basic residues" evidence="2">
    <location>
        <begin position="10"/>
        <end position="22"/>
    </location>
</feature>